<proteinExistence type="inferred from homology"/>
<keyword id="KW-0963">Cytoplasm</keyword>
<keyword id="KW-0328">Glycosyltransferase</keyword>
<keyword id="KW-0660">Purine salvage</keyword>
<keyword id="KW-0808">Transferase</keyword>
<evidence type="ECO:0000255" key="1">
    <source>
        <dbReference type="HAMAP-Rule" id="MF_01184"/>
    </source>
</evidence>
<feature type="chain" id="PRO_0000339757" description="Xanthine phosphoribosyltransferase">
    <location>
        <begin position="1"/>
        <end position="193"/>
    </location>
</feature>
<feature type="binding site" evidence="1">
    <location>
        <position position="20"/>
    </location>
    <ligand>
        <name>xanthine</name>
        <dbReference type="ChEBI" id="CHEBI:17712"/>
    </ligand>
</feature>
<feature type="binding site" evidence="1">
    <location>
        <position position="27"/>
    </location>
    <ligand>
        <name>xanthine</name>
        <dbReference type="ChEBI" id="CHEBI:17712"/>
    </ligand>
</feature>
<feature type="binding site" evidence="1">
    <location>
        <begin position="128"/>
        <end position="132"/>
    </location>
    <ligand>
        <name>5-phospho-alpha-D-ribose 1-diphosphate</name>
        <dbReference type="ChEBI" id="CHEBI:58017"/>
    </ligand>
</feature>
<feature type="binding site" evidence="1">
    <location>
        <position position="156"/>
    </location>
    <ligand>
        <name>xanthine</name>
        <dbReference type="ChEBI" id="CHEBI:17712"/>
    </ligand>
</feature>
<name>XPT_STAHJ</name>
<accession>Q4L383</accession>
<sequence>MESLRQKVKEDGVVIDEKILKVDGFLNHQIDAKLMHEVGKTFYEQFKDKGVTKILTIEASGIAPAIMASLHFDVPCLFAKKAKPSTLKDGFYSTDIHSFTKNKTSTVIVSEEFLNENDTVLIIDDFLANGDASLGLYDIAQQAKAKTVGIGIVVEKSFQDGRQRLEEAGLNVSSLCKVASLKGNQVTLLGENE</sequence>
<protein>
    <recommendedName>
        <fullName evidence="1">Xanthine phosphoribosyltransferase</fullName>
        <shortName evidence="1">XPRTase</shortName>
        <ecNumber evidence="1">2.4.2.22</ecNumber>
    </recommendedName>
</protein>
<organism>
    <name type="scientific">Staphylococcus haemolyticus (strain JCSC1435)</name>
    <dbReference type="NCBI Taxonomy" id="279808"/>
    <lineage>
        <taxon>Bacteria</taxon>
        <taxon>Bacillati</taxon>
        <taxon>Bacillota</taxon>
        <taxon>Bacilli</taxon>
        <taxon>Bacillales</taxon>
        <taxon>Staphylococcaceae</taxon>
        <taxon>Staphylococcus</taxon>
    </lineage>
</organism>
<comment type="function">
    <text evidence="1">Converts the preformed base xanthine, a product of nucleic acid breakdown, to xanthosine 5'-monophosphate (XMP), so it can be reused for RNA or DNA synthesis.</text>
</comment>
<comment type="catalytic activity">
    <reaction evidence="1">
        <text>XMP + diphosphate = xanthine + 5-phospho-alpha-D-ribose 1-diphosphate</text>
        <dbReference type="Rhea" id="RHEA:10800"/>
        <dbReference type="ChEBI" id="CHEBI:17712"/>
        <dbReference type="ChEBI" id="CHEBI:33019"/>
        <dbReference type="ChEBI" id="CHEBI:57464"/>
        <dbReference type="ChEBI" id="CHEBI:58017"/>
        <dbReference type="EC" id="2.4.2.22"/>
    </reaction>
</comment>
<comment type="pathway">
    <text evidence="1">Purine metabolism; XMP biosynthesis via salvage pathway; XMP from xanthine: step 1/1.</text>
</comment>
<comment type="subunit">
    <text evidence="1">Homodimer.</text>
</comment>
<comment type="subcellular location">
    <subcellularLocation>
        <location evidence="1">Cytoplasm</location>
    </subcellularLocation>
</comment>
<comment type="similarity">
    <text evidence="1">Belongs to the purine/pyrimidine phosphoribosyltransferase family. Xpt subfamily.</text>
</comment>
<dbReference type="EC" id="2.4.2.22" evidence="1"/>
<dbReference type="EMBL" id="AP006716">
    <property type="protein sequence ID" value="BAE05894.1"/>
    <property type="molecule type" value="Genomic_DNA"/>
</dbReference>
<dbReference type="RefSeq" id="WP_011276831.1">
    <property type="nucleotide sequence ID" value="NC_007168.1"/>
</dbReference>
<dbReference type="SMR" id="Q4L383"/>
<dbReference type="GeneID" id="93781819"/>
<dbReference type="KEGG" id="sha:SH2585"/>
<dbReference type="eggNOG" id="COG0503">
    <property type="taxonomic scope" value="Bacteria"/>
</dbReference>
<dbReference type="HOGENOM" id="CLU_099015_0_0_9"/>
<dbReference type="OrthoDB" id="9790678at2"/>
<dbReference type="UniPathway" id="UPA00602">
    <property type="reaction ID" value="UER00658"/>
</dbReference>
<dbReference type="Proteomes" id="UP000000543">
    <property type="component" value="Chromosome"/>
</dbReference>
<dbReference type="GO" id="GO:0005737">
    <property type="term" value="C:cytoplasm"/>
    <property type="evidence" value="ECO:0007669"/>
    <property type="project" value="UniProtKB-SubCell"/>
</dbReference>
<dbReference type="GO" id="GO:0000310">
    <property type="term" value="F:xanthine phosphoribosyltransferase activity"/>
    <property type="evidence" value="ECO:0007669"/>
    <property type="project" value="UniProtKB-UniRule"/>
</dbReference>
<dbReference type="GO" id="GO:0006166">
    <property type="term" value="P:purine ribonucleoside salvage"/>
    <property type="evidence" value="ECO:0007669"/>
    <property type="project" value="UniProtKB-KW"/>
</dbReference>
<dbReference type="GO" id="GO:0046110">
    <property type="term" value="P:xanthine metabolic process"/>
    <property type="evidence" value="ECO:0007669"/>
    <property type="project" value="InterPro"/>
</dbReference>
<dbReference type="GO" id="GO:0032265">
    <property type="term" value="P:XMP salvage"/>
    <property type="evidence" value="ECO:0007669"/>
    <property type="project" value="UniProtKB-UniRule"/>
</dbReference>
<dbReference type="CDD" id="cd06223">
    <property type="entry name" value="PRTases_typeI"/>
    <property type="match status" value="1"/>
</dbReference>
<dbReference type="Gene3D" id="3.40.50.2020">
    <property type="match status" value="1"/>
</dbReference>
<dbReference type="HAMAP" id="MF_01184">
    <property type="entry name" value="XPRTase"/>
    <property type="match status" value="1"/>
</dbReference>
<dbReference type="InterPro" id="IPR000836">
    <property type="entry name" value="PRibTrfase_dom"/>
</dbReference>
<dbReference type="InterPro" id="IPR029057">
    <property type="entry name" value="PRTase-like"/>
</dbReference>
<dbReference type="InterPro" id="IPR050118">
    <property type="entry name" value="Pur/Pyrimidine_PRTase"/>
</dbReference>
<dbReference type="InterPro" id="IPR010079">
    <property type="entry name" value="Xanthine_PRibTrfase"/>
</dbReference>
<dbReference type="NCBIfam" id="NF006671">
    <property type="entry name" value="PRK09219.1"/>
    <property type="match status" value="1"/>
</dbReference>
<dbReference type="NCBIfam" id="TIGR01744">
    <property type="entry name" value="XPRTase"/>
    <property type="match status" value="1"/>
</dbReference>
<dbReference type="PANTHER" id="PTHR43864">
    <property type="entry name" value="HYPOXANTHINE/GUANINE PHOSPHORIBOSYLTRANSFERASE"/>
    <property type="match status" value="1"/>
</dbReference>
<dbReference type="PANTHER" id="PTHR43864:SF1">
    <property type="entry name" value="XANTHINE PHOSPHORIBOSYLTRANSFERASE"/>
    <property type="match status" value="1"/>
</dbReference>
<dbReference type="SUPFAM" id="SSF53271">
    <property type="entry name" value="PRTase-like"/>
    <property type="match status" value="1"/>
</dbReference>
<gene>
    <name evidence="1" type="primary">xpt</name>
    <name type="ordered locus">SH2585</name>
</gene>
<reference key="1">
    <citation type="journal article" date="2005" name="J. Bacteriol.">
        <title>Whole-genome sequencing of Staphylococcus haemolyticus uncovers the extreme plasticity of its genome and the evolution of human-colonizing staphylococcal species.</title>
        <authorList>
            <person name="Takeuchi F."/>
            <person name="Watanabe S."/>
            <person name="Baba T."/>
            <person name="Yuzawa H."/>
            <person name="Ito T."/>
            <person name="Morimoto Y."/>
            <person name="Kuroda M."/>
            <person name="Cui L."/>
            <person name="Takahashi M."/>
            <person name="Ankai A."/>
            <person name="Baba S."/>
            <person name="Fukui S."/>
            <person name="Lee J.C."/>
            <person name="Hiramatsu K."/>
        </authorList>
    </citation>
    <scope>NUCLEOTIDE SEQUENCE [LARGE SCALE GENOMIC DNA]</scope>
    <source>
        <strain>JCSC1435</strain>
    </source>
</reference>